<name>IDI_KLEP3</name>
<feature type="chain" id="PRO_1000099439" description="Isopentenyl-diphosphate Delta-isomerase">
    <location>
        <begin position="1"/>
        <end position="184"/>
    </location>
</feature>
<feature type="domain" description="Nudix hydrolase">
    <location>
        <begin position="30"/>
        <end position="164"/>
    </location>
</feature>
<feature type="active site" evidence="1">
    <location>
        <position position="67"/>
    </location>
</feature>
<feature type="active site" evidence="1">
    <location>
        <position position="116"/>
    </location>
</feature>
<feature type="binding site" evidence="1">
    <location>
        <position position="25"/>
    </location>
    <ligand>
        <name>Mn(2+)</name>
        <dbReference type="ChEBI" id="CHEBI:29035"/>
    </ligand>
</feature>
<feature type="binding site" evidence="1">
    <location>
        <position position="32"/>
    </location>
    <ligand>
        <name>Mn(2+)</name>
        <dbReference type="ChEBI" id="CHEBI:29035"/>
    </ligand>
</feature>
<feature type="binding site" evidence="1">
    <location>
        <position position="69"/>
    </location>
    <ligand>
        <name>Mn(2+)</name>
        <dbReference type="ChEBI" id="CHEBI:29035"/>
    </ligand>
</feature>
<feature type="binding site" evidence="1">
    <location>
        <position position="87"/>
    </location>
    <ligand>
        <name>Mg(2+)</name>
        <dbReference type="ChEBI" id="CHEBI:18420"/>
    </ligand>
</feature>
<feature type="binding site" evidence="1">
    <location>
        <position position="114"/>
    </location>
    <ligand>
        <name>Mn(2+)</name>
        <dbReference type="ChEBI" id="CHEBI:29035"/>
    </ligand>
</feature>
<feature type="binding site" evidence="1">
    <location>
        <position position="116"/>
    </location>
    <ligand>
        <name>Mn(2+)</name>
        <dbReference type="ChEBI" id="CHEBI:29035"/>
    </ligand>
</feature>
<dbReference type="EC" id="5.3.3.2" evidence="1"/>
<dbReference type="EMBL" id="CP000964">
    <property type="protein sequence ID" value="ACI10156.1"/>
    <property type="molecule type" value="Genomic_DNA"/>
</dbReference>
<dbReference type="SMR" id="B5XUF5"/>
<dbReference type="KEGG" id="kpe:KPK_0781"/>
<dbReference type="HOGENOM" id="CLU_060552_2_0_6"/>
<dbReference type="UniPathway" id="UPA00059">
    <property type="reaction ID" value="UER00104"/>
</dbReference>
<dbReference type="Proteomes" id="UP000001734">
    <property type="component" value="Chromosome"/>
</dbReference>
<dbReference type="GO" id="GO:0005737">
    <property type="term" value="C:cytoplasm"/>
    <property type="evidence" value="ECO:0007669"/>
    <property type="project" value="UniProtKB-SubCell"/>
</dbReference>
<dbReference type="GO" id="GO:0004452">
    <property type="term" value="F:isopentenyl-diphosphate delta-isomerase activity"/>
    <property type="evidence" value="ECO:0007669"/>
    <property type="project" value="UniProtKB-UniRule"/>
</dbReference>
<dbReference type="GO" id="GO:0046872">
    <property type="term" value="F:metal ion binding"/>
    <property type="evidence" value="ECO:0007669"/>
    <property type="project" value="UniProtKB-KW"/>
</dbReference>
<dbReference type="GO" id="GO:0050992">
    <property type="term" value="P:dimethylallyl diphosphate biosynthetic process"/>
    <property type="evidence" value="ECO:0007669"/>
    <property type="project" value="UniProtKB-UniRule"/>
</dbReference>
<dbReference type="GO" id="GO:0008299">
    <property type="term" value="P:isoprenoid biosynthetic process"/>
    <property type="evidence" value="ECO:0007669"/>
    <property type="project" value="UniProtKB-KW"/>
</dbReference>
<dbReference type="CDD" id="cd02885">
    <property type="entry name" value="NUDIX_IPP_Isomerase"/>
    <property type="match status" value="1"/>
</dbReference>
<dbReference type="FunFam" id="3.90.79.10:FF:000009">
    <property type="entry name" value="Isopentenyl-diphosphate Delta-isomerase"/>
    <property type="match status" value="1"/>
</dbReference>
<dbReference type="Gene3D" id="3.90.79.10">
    <property type="entry name" value="Nucleoside Triphosphate Pyrophosphohydrolase"/>
    <property type="match status" value="1"/>
</dbReference>
<dbReference type="HAMAP" id="MF_00202">
    <property type="entry name" value="Idi"/>
    <property type="match status" value="1"/>
</dbReference>
<dbReference type="InterPro" id="IPR056375">
    <property type="entry name" value="Idi_bact"/>
</dbReference>
<dbReference type="InterPro" id="IPR011876">
    <property type="entry name" value="IsopentenylPP_isomerase_typ1"/>
</dbReference>
<dbReference type="InterPro" id="IPR015797">
    <property type="entry name" value="NUDIX_hydrolase-like_dom_sf"/>
</dbReference>
<dbReference type="InterPro" id="IPR000086">
    <property type="entry name" value="NUDIX_hydrolase_dom"/>
</dbReference>
<dbReference type="NCBIfam" id="TIGR02150">
    <property type="entry name" value="IPP_isom_1"/>
    <property type="match status" value="1"/>
</dbReference>
<dbReference type="NCBIfam" id="NF002995">
    <property type="entry name" value="PRK03759.1"/>
    <property type="match status" value="1"/>
</dbReference>
<dbReference type="PANTHER" id="PTHR10885">
    <property type="entry name" value="ISOPENTENYL-DIPHOSPHATE DELTA-ISOMERASE"/>
    <property type="match status" value="1"/>
</dbReference>
<dbReference type="PANTHER" id="PTHR10885:SF0">
    <property type="entry name" value="ISOPENTENYL-DIPHOSPHATE DELTA-ISOMERASE"/>
    <property type="match status" value="1"/>
</dbReference>
<dbReference type="Pfam" id="PF00293">
    <property type="entry name" value="NUDIX"/>
    <property type="match status" value="1"/>
</dbReference>
<dbReference type="PIRSF" id="PIRSF018427">
    <property type="entry name" value="Isopntndiph_ism"/>
    <property type="match status" value="1"/>
</dbReference>
<dbReference type="SUPFAM" id="SSF55811">
    <property type="entry name" value="Nudix"/>
    <property type="match status" value="1"/>
</dbReference>
<dbReference type="PROSITE" id="PS51462">
    <property type="entry name" value="NUDIX"/>
    <property type="match status" value="1"/>
</dbReference>
<reference key="1">
    <citation type="journal article" date="2008" name="PLoS Genet.">
        <title>Complete genome sequence of the N2-fixing broad host range endophyte Klebsiella pneumoniae 342 and virulence predictions verified in mice.</title>
        <authorList>
            <person name="Fouts D.E."/>
            <person name="Tyler H.L."/>
            <person name="DeBoy R.T."/>
            <person name="Daugherty S."/>
            <person name="Ren Q."/>
            <person name="Badger J.H."/>
            <person name="Durkin A.S."/>
            <person name="Huot H."/>
            <person name="Shrivastava S."/>
            <person name="Kothari S."/>
            <person name="Dodson R.J."/>
            <person name="Mohamoud Y."/>
            <person name="Khouri H."/>
            <person name="Roesch L.F.W."/>
            <person name="Krogfelt K.A."/>
            <person name="Struve C."/>
            <person name="Triplett E.W."/>
            <person name="Methe B.A."/>
        </authorList>
    </citation>
    <scope>NUCLEOTIDE SEQUENCE [LARGE SCALE GENOMIC DNA]</scope>
    <source>
        <strain>342</strain>
    </source>
</reference>
<organism>
    <name type="scientific">Klebsiella pneumoniae (strain 342)</name>
    <dbReference type="NCBI Taxonomy" id="507522"/>
    <lineage>
        <taxon>Bacteria</taxon>
        <taxon>Pseudomonadati</taxon>
        <taxon>Pseudomonadota</taxon>
        <taxon>Gammaproteobacteria</taxon>
        <taxon>Enterobacterales</taxon>
        <taxon>Enterobacteriaceae</taxon>
        <taxon>Klebsiella/Raoultella group</taxon>
        <taxon>Klebsiella</taxon>
        <taxon>Klebsiella pneumoniae complex</taxon>
    </lineage>
</organism>
<accession>B5XUF5</accession>
<protein>
    <recommendedName>
        <fullName evidence="1">Isopentenyl-diphosphate Delta-isomerase</fullName>
        <shortName evidence="1">IPP isomerase</shortName>
        <ecNumber evidence="1">5.3.3.2</ecNumber>
    </recommendedName>
    <alternativeName>
        <fullName evidence="1">IPP:DMAPP isomerase</fullName>
    </alternativeName>
    <alternativeName>
        <fullName evidence="1">Isopentenyl pyrophosphate isomerase</fullName>
    </alternativeName>
</protein>
<keyword id="KW-0963">Cytoplasm</keyword>
<keyword id="KW-0413">Isomerase</keyword>
<keyword id="KW-0414">Isoprene biosynthesis</keyword>
<keyword id="KW-0460">Magnesium</keyword>
<keyword id="KW-0464">Manganese</keyword>
<keyword id="KW-0479">Metal-binding</keyword>
<comment type="function">
    <text evidence="1">Catalyzes the 1,3-allylic rearrangement of the homoallylic substrate isopentenyl (IPP) to its highly electrophilic allylic isomer, dimethylallyl diphosphate (DMAPP).</text>
</comment>
<comment type="catalytic activity">
    <reaction evidence="1">
        <text>isopentenyl diphosphate = dimethylallyl diphosphate</text>
        <dbReference type="Rhea" id="RHEA:23284"/>
        <dbReference type="ChEBI" id="CHEBI:57623"/>
        <dbReference type="ChEBI" id="CHEBI:128769"/>
        <dbReference type="EC" id="5.3.3.2"/>
    </reaction>
</comment>
<comment type="cofactor">
    <cofactor evidence="1">
        <name>Mg(2+)</name>
        <dbReference type="ChEBI" id="CHEBI:18420"/>
    </cofactor>
    <text evidence="1">Binds 1 Mg(2+) ion per subunit. The magnesium ion binds only when substrate is bound.</text>
</comment>
<comment type="cofactor">
    <cofactor evidence="1">
        <name>Mn(2+)</name>
        <dbReference type="ChEBI" id="CHEBI:29035"/>
    </cofactor>
    <text evidence="1">Binds 1 Mn(2+) ion per subunit.</text>
</comment>
<comment type="pathway">
    <text evidence="1">Isoprenoid biosynthesis; dimethylallyl diphosphate biosynthesis; dimethylallyl diphosphate from isopentenyl diphosphate: step 1/1.</text>
</comment>
<comment type="subunit">
    <text evidence="1">Homodimer.</text>
</comment>
<comment type="subcellular location">
    <subcellularLocation>
        <location evidence="1">Cytoplasm</location>
    </subcellularLocation>
</comment>
<comment type="similarity">
    <text evidence="1">Belongs to the IPP isomerase type 1 family.</text>
</comment>
<proteinExistence type="inferred from homology"/>
<evidence type="ECO:0000255" key="1">
    <source>
        <dbReference type="HAMAP-Rule" id="MF_00202"/>
    </source>
</evidence>
<sequence>MAGEHVILLDEQDQPAGMLEKYAAHTLDTPLHLAFSCWLFNQQGQFLVTRRSLGKKAWPGVWTNSVCGHPQQGETFEQAVTRRCRFELGVEIADIAPIHPAFRYRAVAPNGIVENEVCPVYAARVVSQVQPNDDEVMDYQWVDLETMLSALAATPWAFSPWMVLEAENQDARQALIDFVARLRG</sequence>
<gene>
    <name evidence="1" type="primary">idi</name>
    <name type="ordered locus">KPK_0781</name>
</gene>